<geneLocation type="chloroplast"/>
<protein>
    <recommendedName>
        <fullName evidence="1">Cytochrome b6-f complex subunit 8</fullName>
    </recommendedName>
    <alternativeName>
        <fullName evidence="1">Cytochrome b6-f complex subunit PetN</fullName>
    </alternativeName>
    <alternativeName>
        <fullName evidence="1">Cytochrome b6-f complex subunit VIII</fullName>
    </alternativeName>
</protein>
<keyword id="KW-0150">Chloroplast</keyword>
<keyword id="KW-0249">Electron transport</keyword>
<keyword id="KW-0472">Membrane</keyword>
<keyword id="KW-0602">Photosynthesis</keyword>
<keyword id="KW-0934">Plastid</keyword>
<keyword id="KW-0793">Thylakoid</keyword>
<keyword id="KW-0812">Transmembrane</keyword>
<keyword id="KW-1133">Transmembrane helix</keyword>
<keyword id="KW-0813">Transport</keyword>
<evidence type="ECO:0000255" key="1">
    <source>
        <dbReference type="HAMAP-Rule" id="MF_00395"/>
    </source>
</evidence>
<comment type="function">
    <text evidence="1">Component of the cytochrome b6-f complex, which mediates electron transfer between photosystem II (PSII) and photosystem I (PSI), cyclic electron flow around PSI, and state transitions.</text>
</comment>
<comment type="subunit">
    <text evidence="1">The 4 large subunits of the cytochrome b6-f complex are cytochrome b6, subunit IV (17 kDa polypeptide, PetD), cytochrome f and the Rieske protein, while the 4 small subunits are PetG, PetL, PetM and PetN. The complex functions as a dimer.</text>
</comment>
<comment type="subcellular location">
    <subcellularLocation>
        <location evidence="1">Plastid</location>
        <location evidence="1">Chloroplast thylakoid membrane</location>
        <topology evidence="1">Single-pass membrane protein</topology>
    </subcellularLocation>
</comment>
<comment type="similarity">
    <text evidence="1">Belongs to the PetN family.</text>
</comment>
<gene>
    <name evidence="1" type="primary">petN</name>
</gene>
<reference key="1">
    <citation type="journal article" date="2008" name="Nucleic Acids Res.">
        <title>The complete nucleotide sequences of the five genetically distinct plastid genomes of Oenothera, subsection Oenothera: I. Sequence evaluation and plastome evolution.</title>
        <authorList>
            <person name="Greiner S."/>
            <person name="Wang X."/>
            <person name="Rauwolf U."/>
            <person name="Silber M.V."/>
            <person name="Mayer K."/>
            <person name="Meurer J."/>
            <person name="Haberer G."/>
            <person name="Herrmann R.G."/>
        </authorList>
    </citation>
    <scope>NUCLEOTIDE SEQUENCE [LARGE SCALE GENOMIC DNA]</scope>
    <source>
        <strain>cv. Douthat 1</strain>
    </source>
</reference>
<sequence length="29" mass="3170">MDIVSLAWAALMVVFTFSLSLVVWGRSGL</sequence>
<accession>B0Z4M4</accession>
<name>PETN_OENAR</name>
<proteinExistence type="inferred from homology"/>
<organism>
    <name type="scientific">Oenothera argillicola</name>
    <name type="common">Appalachian evening primrose</name>
    <dbReference type="NCBI Taxonomy" id="3940"/>
    <lineage>
        <taxon>Eukaryota</taxon>
        <taxon>Viridiplantae</taxon>
        <taxon>Streptophyta</taxon>
        <taxon>Embryophyta</taxon>
        <taxon>Tracheophyta</taxon>
        <taxon>Spermatophyta</taxon>
        <taxon>Magnoliopsida</taxon>
        <taxon>eudicotyledons</taxon>
        <taxon>Gunneridae</taxon>
        <taxon>Pentapetalae</taxon>
        <taxon>rosids</taxon>
        <taxon>malvids</taxon>
        <taxon>Myrtales</taxon>
        <taxon>Onagraceae</taxon>
        <taxon>Onagroideae</taxon>
        <taxon>Onagreae</taxon>
        <taxon>Oenothera</taxon>
    </lineage>
</organism>
<dbReference type="EMBL" id="EU262887">
    <property type="protein sequence ID" value="ABW98702.1"/>
    <property type="molecule type" value="Genomic_DNA"/>
</dbReference>
<dbReference type="RefSeq" id="YP_001687135.1">
    <property type="nucleotide sequence ID" value="NC_010358.2"/>
</dbReference>
<dbReference type="SMR" id="B0Z4M4"/>
<dbReference type="GeneID" id="5951871"/>
<dbReference type="GO" id="GO:0009535">
    <property type="term" value="C:chloroplast thylakoid membrane"/>
    <property type="evidence" value="ECO:0007669"/>
    <property type="project" value="UniProtKB-SubCell"/>
</dbReference>
<dbReference type="GO" id="GO:0009512">
    <property type="term" value="C:cytochrome b6f complex"/>
    <property type="evidence" value="ECO:0007669"/>
    <property type="project" value="InterPro"/>
</dbReference>
<dbReference type="GO" id="GO:0045158">
    <property type="term" value="F:electron transporter, transferring electrons within cytochrome b6/f complex of photosystem II activity"/>
    <property type="evidence" value="ECO:0007669"/>
    <property type="project" value="InterPro"/>
</dbReference>
<dbReference type="GO" id="GO:0017004">
    <property type="term" value="P:cytochrome complex assembly"/>
    <property type="evidence" value="ECO:0007669"/>
    <property type="project" value="UniProtKB-UniRule"/>
</dbReference>
<dbReference type="GO" id="GO:0015979">
    <property type="term" value="P:photosynthesis"/>
    <property type="evidence" value="ECO:0007669"/>
    <property type="project" value="UniProtKB-KW"/>
</dbReference>
<dbReference type="HAMAP" id="MF_00395">
    <property type="entry name" value="Cytb6_f_PetN"/>
    <property type="match status" value="1"/>
</dbReference>
<dbReference type="InterPro" id="IPR036143">
    <property type="entry name" value="Cytochr_b6-f_cplx_su8_sf"/>
</dbReference>
<dbReference type="InterPro" id="IPR005497">
    <property type="entry name" value="Cytochrome_b6-f_cplx_su8"/>
</dbReference>
<dbReference type="Pfam" id="PF03742">
    <property type="entry name" value="PetN"/>
    <property type="match status" value="1"/>
</dbReference>
<dbReference type="SUPFAM" id="SSF103451">
    <property type="entry name" value="PetN subunit of the cytochrome b6f complex"/>
    <property type="match status" value="1"/>
</dbReference>
<feature type="chain" id="PRO_0000355452" description="Cytochrome b6-f complex subunit 8">
    <location>
        <begin position="1"/>
        <end position="29"/>
    </location>
</feature>
<feature type="transmembrane region" description="Helical" evidence="1">
    <location>
        <begin position="3"/>
        <end position="23"/>
    </location>
</feature>